<accession>B3EHF8</accession>
<dbReference type="EC" id="2.3.1.234" evidence="1"/>
<dbReference type="EMBL" id="CP001097">
    <property type="protein sequence ID" value="ACD91320.1"/>
    <property type="molecule type" value="Genomic_DNA"/>
</dbReference>
<dbReference type="RefSeq" id="WP_012467185.1">
    <property type="nucleotide sequence ID" value="NC_010803.1"/>
</dbReference>
<dbReference type="SMR" id="B3EHF8"/>
<dbReference type="STRING" id="290315.Clim_2297"/>
<dbReference type="KEGG" id="cli:Clim_2297"/>
<dbReference type="eggNOG" id="COG0533">
    <property type="taxonomic scope" value="Bacteria"/>
</dbReference>
<dbReference type="HOGENOM" id="CLU_023208_0_2_10"/>
<dbReference type="OrthoDB" id="9806197at2"/>
<dbReference type="Proteomes" id="UP000008841">
    <property type="component" value="Chromosome"/>
</dbReference>
<dbReference type="GO" id="GO:0005737">
    <property type="term" value="C:cytoplasm"/>
    <property type="evidence" value="ECO:0007669"/>
    <property type="project" value="UniProtKB-SubCell"/>
</dbReference>
<dbReference type="GO" id="GO:0005506">
    <property type="term" value="F:iron ion binding"/>
    <property type="evidence" value="ECO:0007669"/>
    <property type="project" value="UniProtKB-UniRule"/>
</dbReference>
<dbReference type="GO" id="GO:0061711">
    <property type="term" value="F:N(6)-L-threonylcarbamoyladenine synthase activity"/>
    <property type="evidence" value="ECO:0007669"/>
    <property type="project" value="UniProtKB-EC"/>
</dbReference>
<dbReference type="GO" id="GO:0002949">
    <property type="term" value="P:tRNA threonylcarbamoyladenosine modification"/>
    <property type="evidence" value="ECO:0007669"/>
    <property type="project" value="UniProtKB-UniRule"/>
</dbReference>
<dbReference type="CDD" id="cd24133">
    <property type="entry name" value="ASKHA_NBD_TsaD_bac"/>
    <property type="match status" value="1"/>
</dbReference>
<dbReference type="FunFam" id="3.30.420.40:FF:000012">
    <property type="entry name" value="tRNA N6-adenosine threonylcarbamoyltransferase"/>
    <property type="match status" value="1"/>
</dbReference>
<dbReference type="FunFam" id="3.30.420.40:FF:000040">
    <property type="entry name" value="tRNA N6-adenosine threonylcarbamoyltransferase"/>
    <property type="match status" value="1"/>
</dbReference>
<dbReference type="Gene3D" id="3.30.420.40">
    <property type="match status" value="2"/>
</dbReference>
<dbReference type="HAMAP" id="MF_01445">
    <property type="entry name" value="TsaD"/>
    <property type="match status" value="1"/>
</dbReference>
<dbReference type="InterPro" id="IPR043129">
    <property type="entry name" value="ATPase_NBD"/>
</dbReference>
<dbReference type="InterPro" id="IPR000905">
    <property type="entry name" value="Gcp-like_dom"/>
</dbReference>
<dbReference type="InterPro" id="IPR017861">
    <property type="entry name" value="KAE1/TsaD"/>
</dbReference>
<dbReference type="InterPro" id="IPR022450">
    <property type="entry name" value="TsaD"/>
</dbReference>
<dbReference type="NCBIfam" id="TIGR00329">
    <property type="entry name" value="gcp_kae1"/>
    <property type="match status" value="1"/>
</dbReference>
<dbReference type="NCBIfam" id="TIGR03723">
    <property type="entry name" value="T6A_TsaD_YgjD"/>
    <property type="match status" value="1"/>
</dbReference>
<dbReference type="PANTHER" id="PTHR11735">
    <property type="entry name" value="TRNA N6-ADENOSINE THREONYLCARBAMOYLTRANSFERASE"/>
    <property type="match status" value="1"/>
</dbReference>
<dbReference type="PANTHER" id="PTHR11735:SF6">
    <property type="entry name" value="TRNA N6-ADENOSINE THREONYLCARBAMOYLTRANSFERASE, MITOCHONDRIAL"/>
    <property type="match status" value="1"/>
</dbReference>
<dbReference type="Pfam" id="PF00814">
    <property type="entry name" value="TsaD"/>
    <property type="match status" value="1"/>
</dbReference>
<dbReference type="PRINTS" id="PR00789">
    <property type="entry name" value="OSIALOPTASE"/>
</dbReference>
<dbReference type="SUPFAM" id="SSF53067">
    <property type="entry name" value="Actin-like ATPase domain"/>
    <property type="match status" value="1"/>
</dbReference>
<reference key="1">
    <citation type="submission" date="2008-05" db="EMBL/GenBank/DDBJ databases">
        <title>Complete sequence of Chlorobium limicola DSM 245.</title>
        <authorList>
            <consortium name="US DOE Joint Genome Institute"/>
            <person name="Lucas S."/>
            <person name="Copeland A."/>
            <person name="Lapidus A."/>
            <person name="Glavina del Rio T."/>
            <person name="Dalin E."/>
            <person name="Tice H."/>
            <person name="Bruce D."/>
            <person name="Goodwin L."/>
            <person name="Pitluck S."/>
            <person name="Schmutz J."/>
            <person name="Larimer F."/>
            <person name="Land M."/>
            <person name="Hauser L."/>
            <person name="Kyrpides N."/>
            <person name="Ovchinnikova G."/>
            <person name="Zhao F."/>
            <person name="Li T."/>
            <person name="Liu Z."/>
            <person name="Overmann J."/>
            <person name="Bryant D.A."/>
            <person name="Richardson P."/>
        </authorList>
    </citation>
    <scope>NUCLEOTIDE SEQUENCE [LARGE SCALE GENOMIC DNA]</scope>
    <source>
        <strain>DSM 245 / NBRC 103803 / 6330</strain>
    </source>
</reference>
<keyword id="KW-0012">Acyltransferase</keyword>
<keyword id="KW-0963">Cytoplasm</keyword>
<keyword id="KW-0408">Iron</keyword>
<keyword id="KW-0479">Metal-binding</keyword>
<keyword id="KW-0808">Transferase</keyword>
<keyword id="KW-0819">tRNA processing</keyword>
<protein>
    <recommendedName>
        <fullName evidence="1">tRNA N6-adenosine threonylcarbamoyltransferase</fullName>
        <ecNumber evidence="1">2.3.1.234</ecNumber>
    </recommendedName>
    <alternativeName>
        <fullName evidence="1">N6-L-threonylcarbamoyladenine synthase</fullName>
        <shortName evidence="1">t(6)A synthase</shortName>
    </alternativeName>
    <alternativeName>
        <fullName evidence="1">t(6)A37 threonylcarbamoyladenosine biosynthesis protein TsaD</fullName>
    </alternativeName>
    <alternativeName>
        <fullName evidence="1">tRNA threonylcarbamoyladenosine biosynthesis protein TsaD</fullName>
    </alternativeName>
</protein>
<proteinExistence type="inferred from homology"/>
<comment type="function">
    <text evidence="1">Required for the formation of a threonylcarbamoyl group on adenosine at position 37 (t(6)A37) in tRNAs that read codons beginning with adenine. Is involved in the transfer of the threonylcarbamoyl moiety of threonylcarbamoyl-AMP (TC-AMP) to the N6 group of A37, together with TsaE and TsaB. TsaD likely plays a direct catalytic role in this reaction.</text>
</comment>
<comment type="catalytic activity">
    <reaction evidence="1">
        <text>L-threonylcarbamoyladenylate + adenosine(37) in tRNA = N(6)-L-threonylcarbamoyladenosine(37) in tRNA + AMP + H(+)</text>
        <dbReference type="Rhea" id="RHEA:37059"/>
        <dbReference type="Rhea" id="RHEA-COMP:10162"/>
        <dbReference type="Rhea" id="RHEA-COMP:10163"/>
        <dbReference type="ChEBI" id="CHEBI:15378"/>
        <dbReference type="ChEBI" id="CHEBI:73682"/>
        <dbReference type="ChEBI" id="CHEBI:74411"/>
        <dbReference type="ChEBI" id="CHEBI:74418"/>
        <dbReference type="ChEBI" id="CHEBI:456215"/>
        <dbReference type="EC" id="2.3.1.234"/>
    </reaction>
</comment>
<comment type="cofactor">
    <cofactor evidence="1">
        <name>Fe(2+)</name>
        <dbReference type="ChEBI" id="CHEBI:29033"/>
    </cofactor>
    <text evidence="1">Binds 1 Fe(2+) ion per subunit.</text>
</comment>
<comment type="subcellular location">
    <subcellularLocation>
        <location evidence="1">Cytoplasm</location>
    </subcellularLocation>
</comment>
<comment type="similarity">
    <text evidence="1">Belongs to the KAE1 / TsaD family.</text>
</comment>
<name>TSAD_CHLL2</name>
<organism>
    <name type="scientific">Chlorobium limicola (strain DSM 245 / NBRC 103803 / 6330)</name>
    <dbReference type="NCBI Taxonomy" id="290315"/>
    <lineage>
        <taxon>Bacteria</taxon>
        <taxon>Pseudomonadati</taxon>
        <taxon>Chlorobiota</taxon>
        <taxon>Chlorobiia</taxon>
        <taxon>Chlorobiales</taxon>
        <taxon>Chlorobiaceae</taxon>
        <taxon>Chlorobium/Pelodictyon group</taxon>
        <taxon>Chlorobium</taxon>
    </lineage>
</organism>
<feature type="chain" id="PRO_1000145960" description="tRNA N6-adenosine threonylcarbamoyltransferase">
    <location>
        <begin position="1"/>
        <end position="353"/>
    </location>
</feature>
<feature type="binding site" evidence="1">
    <location>
        <position position="109"/>
    </location>
    <ligand>
        <name>Fe cation</name>
        <dbReference type="ChEBI" id="CHEBI:24875"/>
    </ligand>
</feature>
<feature type="binding site" evidence="1">
    <location>
        <position position="113"/>
    </location>
    <ligand>
        <name>Fe cation</name>
        <dbReference type="ChEBI" id="CHEBI:24875"/>
    </ligand>
</feature>
<feature type="binding site" evidence="1">
    <location>
        <begin position="136"/>
        <end position="140"/>
    </location>
    <ligand>
        <name>substrate</name>
    </ligand>
</feature>
<feature type="binding site" evidence="1">
    <location>
        <position position="169"/>
    </location>
    <ligand>
        <name>substrate</name>
    </ligand>
</feature>
<feature type="binding site" evidence="1">
    <location>
        <position position="182"/>
    </location>
    <ligand>
        <name>substrate</name>
    </ligand>
</feature>
<feature type="binding site" evidence="1">
    <location>
        <position position="186"/>
    </location>
    <ligand>
        <name>substrate</name>
    </ligand>
</feature>
<feature type="binding site" evidence="1">
    <location>
        <position position="284"/>
    </location>
    <ligand>
        <name>substrate</name>
    </ligand>
</feature>
<feature type="binding site" evidence="1">
    <location>
        <position position="312"/>
    </location>
    <ligand>
        <name>Fe cation</name>
        <dbReference type="ChEBI" id="CHEBI:24875"/>
    </ligand>
</feature>
<gene>
    <name evidence="1" type="primary">tsaD</name>
    <name type="synonym">gcp</name>
    <name type="ordered locus">Clim_2297</name>
</gene>
<evidence type="ECO:0000255" key="1">
    <source>
        <dbReference type="HAMAP-Rule" id="MF_01445"/>
    </source>
</evidence>
<sequence length="353" mass="37227">MNILGIETSCDETSAAVLLDGRIGSNVISSQRCHTSFGGVVPELASREHERTIVSIVNSAVTEANITKNELDCIAATAGPGLIGAVMVGLCFAEGMAFALGIPFVPVNHIEAHMFSAFIPESPEHKSPEGPFISLTVSGGHTLLSLVREDLSYDVIGKTLDDAAGEAFDKTGKMLGLAYPAGPVIDRLAASGNPHFHAFPKALTSSSQTSRSYRGNFDFSFSGLKTSVLTWLQKHPAEFIQTHLHDIAASIQYAIVSVLTEKAVAAARYFRTDAISVAGGVSANSALRTAMQEACRHHGIRLYIPGTVYSTDNAAMIASLAGLMLSKGAVRKNNYDVAPFASFAAGAIKASLK</sequence>